<sequence>MSLNAETKAAIVAEYAQCENDTGSPEVQVALLTASINHLQGHFANHKHDHHSRRGLLRMVSSRRKLLDYLKGKNSTRYQDLIKRLGLRR</sequence>
<proteinExistence type="inferred from homology"/>
<organism>
    <name type="scientific">Aliivibrio salmonicida (strain LFI1238)</name>
    <name type="common">Vibrio salmonicida (strain LFI1238)</name>
    <dbReference type="NCBI Taxonomy" id="316275"/>
    <lineage>
        <taxon>Bacteria</taxon>
        <taxon>Pseudomonadati</taxon>
        <taxon>Pseudomonadota</taxon>
        <taxon>Gammaproteobacteria</taxon>
        <taxon>Vibrionales</taxon>
        <taxon>Vibrionaceae</taxon>
        <taxon>Aliivibrio</taxon>
    </lineage>
</organism>
<protein>
    <recommendedName>
        <fullName evidence="1">Small ribosomal subunit protein uS15</fullName>
    </recommendedName>
    <alternativeName>
        <fullName evidence="2">30S ribosomal protein S15</fullName>
    </alternativeName>
</protein>
<keyword id="KW-0687">Ribonucleoprotein</keyword>
<keyword id="KW-0689">Ribosomal protein</keyword>
<keyword id="KW-0694">RNA-binding</keyword>
<keyword id="KW-0699">rRNA-binding</keyword>
<comment type="function">
    <text evidence="1">One of the primary rRNA binding proteins, it binds directly to 16S rRNA where it helps nucleate assembly of the platform of the 30S subunit by binding and bridging several RNA helices of the 16S rRNA.</text>
</comment>
<comment type="function">
    <text evidence="1">Forms an intersubunit bridge (bridge B4) with the 23S rRNA of the 50S subunit in the ribosome.</text>
</comment>
<comment type="subunit">
    <text evidence="1">Part of the 30S ribosomal subunit. Forms a bridge to the 50S subunit in the 70S ribosome, contacting the 23S rRNA.</text>
</comment>
<comment type="similarity">
    <text evidence="1">Belongs to the universal ribosomal protein uS15 family.</text>
</comment>
<name>RS15_ALISL</name>
<dbReference type="EMBL" id="FM178379">
    <property type="protein sequence ID" value="CAQ78286.1"/>
    <property type="molecule type" value="Genomic_DNA"/>
</dbReference>
<dbReference type="RefSeq" id="WP_012549409.1">
    <property type="nucleotide sequence ID" value="NC_011312.1"/>
</dbReference>
<dbReference type="SMR" id="B6ENE5"/>
<dbReference type="KEGG" id="vsa:VSAL_I0601"/>
<dbReference type="eggNOG" id="COG0184">
    <property type="taxonomic scope" value="Bacteria"/>
</dbReference>
<dbReference type="HOGENOM" id="CLU_148518_0_0_6"/>
<dbReference type="Proteomes" id="UP000001730">
    <property type="component" value="Chromosome 1"/>
</dbReference>
<dbReference type="GO" id="GO:0022627">
    <property type="term" value="C:cytosolic small ribosomal subunit"/>
    <property type="evidence" value="ECO:0007669"/>
    <property type="project" value="TreeGrafter"/>
</dbReference>
<dbReference type="GO" id="GO:0019843">
    <property type="term" value="F:rRNA binding"/>
    <property type="evidence" value="ECO:0007669"/>
    <property type="project" value="UniProtKB-UniRule"/>
</dbReference>
<dbReference type="GO" id="GO:0003735">
    <property type="term" value="F:structural constituent of ribosome"/>
    <property type="evidence" value="ECO:0007669"/>
    <property type="project" value="InterPro"/>
</dbReference>
<dbReference type="GO" id="GO:0006412">
    <property type="term" value="P:translation"/>
    <property type="evidence" value="ECO:0007669"/>
    <property type="project" value="UniProtKB-UniRule"/>
</dbReference>
<dbReference type="CDD" id="cd00353">
    <property type="entry name" value="Ribosomal_S15p_S13e"/>
    <property type="match status" value="1"/>
</dbReference>
<dbReference type="FunFam" id="1.10.287.10:FF:000002">
    <property type="entry name" value="30S ribosomal protein S15"/>
    <property type="match status" value="1"/>
</dbReference>
<dbReference type="Gene3D" id="6.10.250.3130">
    <property type="match status" value="1"/>
</dbReference>
<dbReference type="Gene3D" id="1.10.287.10">
    <property type="entry name" value="S15/NS1, RNA-binding"/>
    <property type="match status" value="1"/>
</dbReference>
<dbReference type="HAMAP" id="MF_01343_B">
    <property type="entry name" value="Ribosomal_uS15_B"/>
    <property type="match status" value="1"/>
</dbReference>
<dbReference type="InterPro" id="IPR000589">
    <property type="entry name" value="Ribosomal_uS15"/>
</dbReference>
<dbReference type="InterPro" id="IPR005290">
    <property type="entry name" value="Ribosomal_uS15_bac-type"/>
</dbReference>
<dbReference type="InterPro" id="IPR009068">
    <property type="entry name" value="uS15_NS1_RNA-bd_sf"/>
</dbReference>
<dbReference type="NCBIfam" id="TIGR00952">
    <property type="entry name" value="S15_bact"/>
    <property type="match status" value="1"/>
</dbReference>
<dbReference type="PANTHER" id="PTHR23321">
    <property type="entry name" value="RIBOSOMAL PROTEIN S15, BACTERIAL AND ORGANELLAR"/>
    <property type="match status" value="1"/>
</dbReference>
<dbReference type="PANTHER" id="PTHR23321:SF26">
    <property type="entry name" value="SMALL RIBOSOMAL SUBUNIT PROTEIN US15M"/>
    <property type="match status" value="1"/>
</dbReference>
<dbReference type="Pfam" id="PF00312">
    <property type="entry name" value="Ribosomal_S15"/>
    <property type="match status" value="1"/>
</dbReference>
<dbReference type="SMART" id="SM01387">
    <property type="entry name" value="Ribosomal_S15"/>
    <property type="match status" value="1"/>
</dbReference>
<dbReference type="SUPFAM" id="SSF47060">
    <property type="entry name" value="S15/NS1 RNA-binding domain"/>
    <property type="match status" value="1"/>
</dbReference>
<dbReference type="PROSITE" id="PS00362">
    <property type="entry name" value="RIBOSOMAL_S15"/>
    <property type="match status" value="1"/>
</dbReference>
<reference key="1">
    <citation type="journal article" date="2008" name="BMC Genomics">
        <title>The genome sequence of the fish pathogen Aliivibrio salmonicida strain LFI1238 shows extensive evidence of gene decay.</title>
        <authorList>
            <person name="Hjerde E."/>
            <person name="Lorentzen M.S."/>
            <person name="Holden M.T."/>
            <person name="Seeger K."/>
            <person name="Paulsen S."/>
            <person name="Bason N."/>
            <person name="Churcher C."/>
            <person name="Harris D."/>
            <person name="Norbertczak H."/>
            <person name="Quail M.A."/>
            <person name="Sanders S."/>
            <person name="Thurston S."/>
            <person name="Parkhill J."/>
            <person name="Willassen N.P."/>
            <person name="Thomson N.R."/>
        </authorList>
    </citation>
    <scope>NUCLEOTIDE SEQUENCE [LARGE SCALE GENOMIC DNA]</scope>
    <source>
        <strain>LFI1238</strain>
    </source>
</reference>
<evidence type="ECO:0000255" key="1">
    <source>
        <dbReference type="HAMAP-Rule" id="MF_01343"/>
    </source>
</evidence>
<evidence type="ECO:0000305" key="2"/>
<gene>
    <name evidence="1" type="primary">rpsO</name>
    <name type="ordered locus">VSAL_I0601</name>
</gene>
<accession>B6ENE5</accession>
<feature type="chain" id="PRO_1000143067" description="Small ribosomal subunit protein uS15">
    <location>
        <begin position="1"/>
        <end position="89"/>
    </location>
</feature>